<protein>
    <recommendedName>
        <fullName>Breast cancer anti-estrogen resistance protein 1</fullName>
    </recommendedName>
    <alternativeName>
        <fullName>CRK-associated substrate</fullName>
    </alternativeName>
    <alternativeName>
        <fullName>p130cas</fullName>
    </alternativeName>
</protein>
<reference key="1">
    <citation type="journal article" date="1994" name="EMBO J.">
        <title>A novel signaling molecule, p130, forms stable complexes in vivo with v-Crk and v-Src in a tyrosine phosphorylation-dependent manner.</title>
        <authorList>
            <person name="Sakai R."/>
            <person name="Iwamatsu A."/>
            <person name="Hirano N."/>
            <person name="Ogawa S."/>
            <person name="Tanaka T."/>
            <person name="Mano H."/>
            <person name="Yazaki Y."/>
            <person name="Hirai H."/>
        </authorList>
    </citation>
    <scope>NUCLEOTIDE SEQUENCE [MRNA]</scope>
    <scope>PARTIAL PROTEIN SEQUENCE</scope>
    <source>
        <tissue>Fibroblast</tissue>
    </source>
</reference>
<reference key="2">
    <citation type="journal article" date="1995" name="Curr. Biol.">
        <title>Evidence that SH2 domains promote processive phosphorylation by protein-tyrosine kinases.</title>
        <authorList>
            <person name="Mayer B.J."/>
            <person name="Hirai H."/>
            <person name="Sakai R."/>
        </authorList>
    </citation>
    <scope>PHOSPHORYLATION AT TYR-347 BY ABL1</scope>
</reference>
<reference key="3">
    <citation type="journal article" date="1997" name="J. Biol. Chem.">
        <title>Tyrosine phosphorylation of Crk-associated substrates by focal adhesion kinase. A putative mechanism for the integrin-mediated tyrosine phosphorylation of Crk-associated substrates.</title>
        <authorList>
            <person name="Tachibana K."/>
            <person name="Urano T."/>
            <person name="Fujita H."/>
            <person name="Ohashi Y."/>
            <person name="Kamiguchi K."/>
            <person name="Iwata S."/>
            <person name="Hirai H."/>
            <person name="Morimoto C."/>
        </authorList>
    </citation>
    <scope>PHOSPHORYLATION AT TYROSINE RESIDUES BY PTK2/FAK1</scope>
</reference>
<reference key="4">
    <citation type="journal article" date="2012" name="Nat. Commun.">
        <title>Quantitative maps of protein phosphorylation sites across 14 different rat organs and tissues.</title>
        <authorList>
            <person name="Lundby A."/>
            <person name="Secher A."/>
            <person name="Lage K."/>
            <person name="Nordsborg N.B."/>
            <person name="Dmytriyev A."/>
            <person name="Lundby C."/>
            <person name="Olsen J.V."/>
        </authorList>
    </citation>
    <scope>PHOSPHORYLATION [LARGE SCALE ANALYSIS] AT SER-737</scope>
    <scope>IDENTIFICATION BY MASS SPECTROMETRY [LARGE SCALE ANALYSIS]</scope>
</reference>
<gene>
    <name type="primary">Bcar1</name>
    <name type="synonym">Cas</name>
    <name type="synonym">Crkas</name>
</gene>
<dbReference type="EMBL" id="D29766">
    <property type="protein sequence ID" value="BAA06169.1"/>
    <property type="molecule type" value="mRNA"/>
</dbReference>
<dbReference type="EMBL" id="D29766">
    <property type="protein sequence ID" value="BAA06170.1"/>
    <property type="molecule type" value="mRNA"/>
</dbReference>
<dbReference type="PIR" id="S46992">
    <property type="entry name" value="S46992"/>
</dbReference>
<dbReference type="RefSeq" id="NP_037063.1">
    <property type="nucleotide sequence ID" value="NM_012931.1"/>
</dbReference>
<dbReference type="PDB" id="1X27">
    <property type="method" value="X-ray"/>
    <property type="resolution" value="2.70 A"/>
    <property type="chains" value="I/J/K/L/M/N=759-767"/>
</dbReference>
<dbReference type="PDB" id="1Z23">
    <property type="method" value="NMR"/>
    <property type="chains" value="A=546-708"/>
</dbReference>
<dbReference type="PDBsum" id="1X27"/>
<dbReference type="PDBsum" id="1Z23"/>
<dbReference type="BMRB" id="Q63767"/>
<dbReference type="SMR" id="Q63767"/>
<dbReference type="BioGRID" id="247449">
    <property type="interactions" value="5"/>
</dbReference>
<dbReference type="CORUM" id="Q63767"/>
<dbReference type="FunCoup" id="Q63767">
    <property type="interactions" value="1800"/>
</dbReference>
<dbReference type="IntAct" id="Q63767">
    <property type="interactions" value="7"/>
</dbReference>
<dbReference type="MINT" id="Q63767"/>
<dbReference type="STRING" id="10116.ENSRNOP00000039940"/>
<dbReference type="GlyGen" id="Q63767">
    <property type="glycosylation" value="4 sites"/>
</dbReference>
<dbReference type="iPTMnet" id="Q63767"/>
<dbReference type="PhosphoSitePlus" id="Q63767"/>
<dbReference type="PaxDb" id="10116-ENSRNOP00000039940"/>
<dbReference type="GeneID" id="25414"/>
<dbReference type="KEGG" id="rno:25414"/>
<dbReference type="UCSC" id="RGD:2406">
    <molecule id="Q63767-1"/>
    <property type="organism name" value="rat"/>
</dbReference>
<dbReference type="AGR" id="RGD:2406"/>
<dbReference type="CTD" id="9564"/>
<dbReference type="RGD" id="2406">
    <property type="gene designation" value="Bcar1"/>
</dbReference>
<dbReference type="eggNOG" id="ENOG502QQHE">
    <property type="taxonomic scope" value="Eukaryota"/>
</dbReference>
<dbReference type="InParanoid" id="Q63767"/>
<dbReference type="PhylomeDB" id="Q63767"/>
<dbReference type="Reactome" id="R-RNO-186763">
    <property type="pathway name" value="Downstream signal transduction"/>
</dbReference>
<dbReference type="Reactome" id="R-RNO-372708">
    <property type="pathway name" value="p130Cas linkage to MAPK signaling for integrins"/>
</dbReference>
<dbReference type="Reactome" id="R-RNO-4420097">
    <property type="pathway name" value="VEGFA-VEGFR2 Pathway"/>
</dbReference>
<dbReference type="Reactome" id="R-RNO-8849471">
    <property type="pathway name" value="PTK6 Regulates RHO GTPases, RAS GTPase and MAP kinases"/>
</dbReference>
<dbReference type="EvolutionaryTrace" id="Q63767"/>
<dbReference type="PRO" id="PR:Q63767"/>
<dbReference type="Proteomes" id="UP000002494">
    <property type="component" value="Unplaced"/>
</dbReference>
<dbReference type="GO" id="GO:0015629">
    <property type="term" value="C:actin cytoskeleton"/>
    <property type="evidence" value="ECO:0000266"/>
    <property type="project" value="RGD"/>
</dbReference>
<dbReference type="GO" id="GO:0030424">
    <property type="term" value="C:axon"/>
    <property type="evidence" value="ECO:0007669"/>
    <property type="project" value="UniProtKB-SubCell"/>
</dbReference>
<dbReference type="GO" id="GO:0005737">
    <property type="term" value="C:cytoplasm"/>
    <property type="evidence" value="ECO:0000250"/>
    <property type="project" value="UniProtKB"/>
</dbReference>
<dbReference type="GO" id="GO:0005925">
    <property type="term" value="C:focal adhesion"/>
    <property type="evidence" value="ECO:0000314"/>
    <property type="project" value="UniProtKB"/>
</dbReference>
<dbReference type="GO" id="GO:0030027">
    <property type="term" value="C:lamellipodium"/>
    <property type="evidence" value="ECO:0000266"/>
    <property type="project" value="RGD"/>
</dbReference>
<dbReference type="GO" id="GO:0016020">
    <property type="term" value="C:membrane"/>
    <property type="evidence" value="ECO:0000266"/>
    <property type="project" value="RGD"/>
</dbReference>
<dbReference type="GO" id="GO:0005886">
    <property type="term" value="C:plasma membrane"/>
    <property type="evidence" value="ECO:0000266"/>
    <property type="project" value="RGD"/>
</dbReference>
<dbReference type="GO" id="GO:0001726">
    <property type="term" value="C:ruffle"/>
    <property type="evidence" value="ECO:0000250"/>
    <property type="project" value="UniProtKB"/>
</dbReference>
<dbReference type="GO" id="GO:0019904">
    <property type="term" value="F:protein domain specific binding"/>
    <property type="evidence" value="ECO:0000353"/>
    <property type="project" value="RGD"/>
</dbReference>
<dbReference type="GO" id="GO:0019901">
    <property type="term" value="F:protein kinase binding"/>
    <property type="evidence" value="ECO:0000266"/>
    <property type="project" value="RGD"/>
</dbReference>
<dbReference type="GO" id="GO:0017124">
    <property type="term" value="F:SH3 domain binding"/>
    <property type="evidence" value="ECO:0007669"/>
    <property type="project" value="UniProtKB-KW"/>
</dbReference>
<dbReference type="GO" id="GO:0030036">
    <property type="term" value="P:actin cytoskeleton organization"/>
    <property type="evidence" value="ECO:0000315"/>
    <property type="project" value="RGD"/>
</dbReference>
<dbReference type="GO" id="GO:0007015">
    <property type="term" value="P:actin filament organization"/>
    <property type="evidence" value="ECO:0000250"/>
    <property type="project" value="UniProtKB"/>
</dbReference>
<dbReference type="GO" id="GO:0050851">
    <property type="term" value="P:antigen receptor-mediated signaling pathway"/>
    <property type="evidence" value="ECO:0000250"/>
    <property type="project" value="UniProtKB"/>
</dbReference>
<dbReference type="GO" id="GO:0050853">
    <property type="term" value="P:B cell receptor signaling pathway"/>
    <property type="evidence" value="ECO:0000250"/>
    <property type="project" value="UniProtKB"/>
</dbReference>
<dbReference type="GO" id="GO:0007155">
    <property type="term" value="P:cell adhesion"/>
    <property type="evidence" value="ECO:0007669"/>
    <property type="project" value="UniProtKB-KW"/>
</dbReference>
<dbReference type="GO" id="GO:0060326">
    <property type="term" value="P:cell chemotaxis"/>
    <property type="evidence" value="ECO:0000266"/>
    <property type="project" value="RGD"/>
</dbReference>
<dbReference type="GO" id="GO:0016477">
    <property type="term" value="P:cell migration"/>
    <property type="evidence" value="ECO:0000315"/>
    <property type="project" value="RGD"/>
</dbReference>
<dbReference type="GO" id="GO:0007169">
    <property type="term" value="P:cell surface receptor protein tyrosine kinase signaling pathway"/>
    <property type="evidence" value="ECO:0000318"/>
    <property type="project" value="GO_Central"/>
</dbReference>
<dbReference type="GO" id="GO:1990859">
    <property type="term" value="P:cellular response to endothelin"/>
    <property type="evidence" value="ECO:0000353"/>
    <property type="project" value="RGD"/>
</dbReference>
<dbReference type="GO" id="GO:0035729">
    <property type="term" value="P:cellular response to hepatocyte growth factor stimulus"/>
    <property type="evidence" value="ECO:0000266"/>
    <property type="project" value="RGD"/>
</dbReference>
<dbReference type="GO" id="GO:0071732">
    <property type="term" value="P:cellular response to nitric oxide"/>
    <property type="evidence" value="ECO:0000353"/>
    <property type="project" value="RGD"/>
</dbReference>
<dbReference type="GO" id="GO:0086100">
    <property type="term" value="P:endothelin receptor signaling pathway"/>
    <property type="evidence" value="ECO:0000250"/>
    <property type="project" value="UniProtKB"/>
</dbReference>
<dbReference type="GO" id="GO:0007173">
    <property type="term" value="P:epidermal growth factor receptor signaling pathway"/>
    <property type="evidence" value="ECO:0000314"/>
    <property type="project" value="UniProtKB"/>
</dbReference>
<dbReference type="GO" id="GO:0007186">
    <property type="term" value="P:G protein-coupled receptor signaling pathway"/>
    <property type="evidence" value="ECO:0000250"/>
    <property type="project" value="UniProtKB"/>
</dbReference>
<dbReference type="GO" id="GO:0048012">
    <property type="term" value="P:hepatocyte growth factor receptor signaling pathway"/>
    <property type="evidence" value="ECO:0000266"/>
    <property type="project" value="RGD"/>
</dbReference>
<dbReference type="GO" id="GO:0008286">
    <property type="term" value="P:insulin receptor signaling pathway"/>
    <property type="evidence" value="ECO:0000314"/>
    <property type="project" value="UniProtKB"/>
</dbReference>
<dbReference type="GO" id="GO:0007229">
    <property type="term" value="P:integrin-mediated signaling pathway"/>
    <property type="evidence" value="ECO:0000250"/>
    <property type="project" value="UniProtKB"/>
</dbReference>
<dbReference type="GO" id="GO:1900025">
    <property type="term" value="P:negative regulation of substrate adhesion-dependent cell spreading"/>
    <property type="evidence" value="ECO:0000315"/>
    <property type="project" value="RGD"/>
</dbReference>
<dbReference type="GO" id="GO:0048011">
    <property type="term" value="P:neurotrophin TRK receptor signaling pathway"/>
    <property type="evidence" value="ECO:0000314"/>
    <property type="project" value="UniProtKB"/>
</dbReference>
<dbReference type="GO" id="GO:0048008">
    <property type="term" value="P:platelet-derived growth factor receptor signaling pathway"/>
    <property type="evidence" value="ECO:0000250"/>
    <property type="project" value="UniProtKB"/>
</dbReference>
<dbReference type="GO" id="GO:0030335">
    <property type="term" value="P:positive regulation of cell migration"/>
    <property type="evidence" value="ECO:0000250"/>
    <property type="project" value="UniProtKB"/>
</dbReference>
<dbReference type="GO" id="GO:0010595">
    <property type="term" value="P:positive regulation of endothelial cell migration"/>
    <property type="evidence" value="ECO:0000266"/>
    <property type="project" value="RGD"/>
</dbReference>
<dbReference type="GO" id="GO:0048010">
    <property type="term" value="P:vascular endothelial growth factor receptor signaling pathway"/>
    <property type="evidence" value="ECO:0000266"/>
    <property type="project" value="RGD"/>
</dbReference>
<dbReference type="CDD" id="cd11569">
    <property type="entry name" value="FAT-like_BCAR1_C"/>
    <property type="match status" value="1"/>
</dbReference>
<dbReference type="CDD" id="cd11552">
    <property type="entry name" value="Serine_rich_BCAR1"/>
    <property type="match status" value="1"/>
</dbReference>
<dbReference type="CDD" id="cd12001">
    <property type="entry name" value="SH3_BCAR1"/>
    <property type="match status" value="1"/>
</dbReference>
<dbReference type="FunFam" id="1.20.120.830:FF:000001">
    <property type="entry name" value="BCAR1 scaffold protein, Cas family member"/>
    <property type="match status" value="1"/>
</dbReference>
<dbReference type="FunFam" id="1.20.120.230:FF:000001">
    <property type="entry name" value="Breast cancer anti-estrogen resistance 1"/>
    <property type="match status" value="1"/>
</dbReference>
<dbReference type="FunFam" id="2.30.30.40:FF:000009">
    <property type="entry name" value="Breast cancer anti-estrogen resistance 1"/>
    <property type="match status" value="1"/>
</dbReference>
<dbReference type="Gene3D" id="1.20.120.230">
    <property type="entry name" value="Alpha-catenin/vinculin-like"/>
    <property type="match status" value="1"/>
</dbReference>
<dbReference type="Gene3D" id="1.20.120.830">
    <property type="entry name" value="Serine-rich domain"/>
    <property type="match status" value="1"/>
</dbReference>
<dbReference type="Gene3D" id="2.30.30.40">
    <property type="entry name" value="SH3 Domains"/>
    <property type="match status" value="1"/>
</dbReference>
<dbReference type="InterPro" id="IPR046976">
    <property type="entry name" value="BCAR1_C"/>
</dbReference>
<dbReference type="InterPro" id="IPR035745">
    <property type="entry name" value="BCAR1_SH3"/>
</dbReference>
<dbReference type="InterPro" id="IPR021901">
    <property type="entry name" value="CAS_C"/>
</dbReference>
<dbReference type="InterPro" id="IPR037362">
    <property type="entry name" value="CAS_fam"/>
</dbReference>
<dbReference type="InterPro" id="IPR014928">
    <property type="entry name" value="Serine_rich_dom"/>
</dbReference>
<dbReference type="InterPro" id="IPR038319">
    <property type="entry name" value="Serine_rich_sf"/>
</dbReference>
<dbReference type="InterPro" id="IPR036028">
    <property type="entry name" value="SH3-like_dom_sf"/>
</dbReference>
<dbReference type="InterPro" id="IPR001452">
    <property type="entry name" value="SH3_domain"/>
</dbReference>
<dbReference type="PANTHER" id="PTHR10654:SF15">
    <property type="entry name" value="BREAST CANCER ANTI-ESTROGEN RESISTANCE PROTEIN 1"/>
    <property type="match status" value="1"/>
</dbReference>
<dbReference type="PANTHER" id="PTHR10654">
    <property type="entry name" value="CAS SCAFFOLDING PROTEIN"/>
    <property type="match status" value="1"/>
</dbReference>
<dbReference type="Pfam" id="PF12026">
    <property type="entry name" value="CAS_C"/>
    <property type="match status" value="1"/>
</dbReference>
<dbReference type="Pfam" id="PF08824">
    <property type="entry name" value="Serine_rich"/>
    <property type="match status" value="1"/>
</dbReference>
<dbReference type="Pfam" id="PF00018">
    <property type="entry name" value="SH3_1"/>
    <property type="match status" value="1"/>
</dbReference>
<dbReference type="PRINTS" id="PR00452">
    <property type="entry name" value="SH3DOMAIN"/>
</dbReference>
<dbReference type="PRINTS" id="PR01887">
    <property type="entry name" value="SPECTRNALPHA"/>
</dbReference>
<dbReference type="SMART" id="SM00326">
    <property type="entry name" value="SH3"/>
    <property type="match status" value="1"/>
</dbReference>
<dbReference type="SUPFAM" id="SSF50044">
    <property type="entry name" value="SH3-domain"/>
    <property type="match status" value="1"/>
</dbReference>
<dbReference type="PROSITE" id="PS50002">
    <property type="entry name" value="SH3"/>
    <property type="match status" value="1"/>
</dbReference>
<comment type="function">
    <text evidence="2 3">Docking protein which plays a central coordinating role for tyrosine-kinase-based signaling related to cell adhesion (By similarity). Implicated in induction of cell migration and cell branching (By similarity). Involved in the BCAR3-mediated inhibition of TGFB signaling (By similarity).</text>
</comment>
<comment type="subunit">
    <text evidence="2 3">Forms complexes in vivo with PTK2/FAK1, adapter protein CRKL and LYN kinase. Can heterodimerize with NEDD9. Component of a complex comprised of SH2D3C, BCAR1/CAS, and CRK (By similarity). Within the complex, interacts with SH2D3C (via C-terminus), and CRK (By similarity). Part of a complex comprised of PTPRA, BCAR1, BCAR3 (via SH2 domain) and SRC; the formation of the complex is dependent on integrin mediated-tyrosine phosphorylation of PTPRA (By similarity). Interacts with BCAR3 (via Ras-GEF domain); the interaction regulates adhesion-dependent serine phosphorylation (By similarity). Interacts with SMAD2 and SMAD3 (By similarity). Interacts with NPHP1 (By similarity). Interacts with PTK2B/PYK2 (By similarity). Interacts (via C-terminus) with SH2D3C/CHAT isoform 2 (via C-terminus) (By similarity). Interacts with activated CSPG4. Interacts with BMX, INPPL1/SHIP2 and PEAK1 (By similarity). Part of a collagen stimulated complex involved in cell migration composed of CDC42, CRK, TNK2 and BCAR1/p130cas (By similarity). Interacts with TNK2 via SH3 domains. Interacts with PTK2B/PYK2 (By similarity). Interacts (when tyrosine-phosphorylated) with tensin TNS1; the interaction is increased by phosphorylation of TNS1 (By similarity).</text>
</comment>
<comment type="interaction">
    <interactant intactId="EBI-1176801">
        <id>Q63767</id>
    </interactant>
    <interactant intactId="EBI-968788">
        <id>P18031</id>
        <label>PTPN1</label>
    </interactant>
    <organismsDiffer>true</organismsDiffer>
    <experiments>5</experiments>
</comment>
<comment type="subcellular location">
    <subcellularLocation>
        <location evidence="3">Cell junction</location>
        <location evidence="3">Focal adhesion</location>
    </subcellularLocation>
    <subcellularLocation>
        <location evidence="3">Cytoplasm</location>
    </subcellularLocation>
    <subcellularLocation>
        <location evidence="3">Cell projection</location>
        <location evidence="3">Axon</location>
    </subcellularLocation>
    <text evidence="3">Unphosphorylated form localizes in the cytoplasm (By similarity). Localizes to focal adhesion sites following integrin engagement (By similarity).</text>
</comment>
<comment type="alternative products">
    <event type="alternative splicing"/>
    <isoform>
        <id>Q63767-1</id>
        <name>Long</name>
        <sequence type="displayed"/>
    </isoform>
    <isoform>
        <id>Q63767-2</id>
        <name>Short</name>
        <sequence type="described" ref="VSP_004135"/>
    </isoform>
</comment>
<comment type="tissue specificity">
    <text>Widely expressed. Higher expression in lung, intestine and testis.</text>
</comment>
<comment type="domain">
    <text>Contains a central domain (substrate domain) containing multiple potential SH2-binding sites and a C-terminal domain containing a divergent helix-loop-helix (HLH) motif. The SH2-binding sites putatively bind CRK, NCK and ABL SH2 domains. The HLH motif is absolutely required for the induction of pseudohyphal growth in yeast and mediates heterodimerization with NEDD9.</text>
</comment>
<comment type="domain">
    <text>A serine-rich region promotes activation of the serum response element (SRE).</text>
</comment>
<comment type="domain">
    <text>The SH3 domain is necessary for the localization of the protein to focal adhesions and interacts with one proline-rich region of PTK2/FAK1.</text>
</comment>
<comment type="PTM">
    <text evidence="7 8">PTK2/FAK1 activation mediates phosphorylation at the YDYVHL motif; phosphorylation is most likely catalyzed by SRC family members. SRC-family kinases are recruited to the phosphorylated sites and can phosphorylate other tyrosine residues. Tyrosine phosphorylation is triggered by integrin mediated adhesion of cells to the extracellular matrix.</text>
</comment>
<comment type="PTM">
    <text evidence="2">Phosphorylated by SRC kinase in a EDN1- and PTK2B-mediated manner; phosphorylation strengthens its interaction with BCAR3 as part of the PTK2B/BCAR1/BCAR3/RAP1 signaling pathway.</text>
</comment>
<comment type="PTM">
    <text evidence="1">Dephosphorylated by PTPN14 at Tyr-226.</text>
</comment>
<comment type="similarity">
    <text evidence="9">Belongs to the CAS family.</text>
</comment>
<keyword id="KW-0002">3D-structure</keyword>
<keyword id="KW-0007">Acetylation</keyword>
<keyword id="KW-0025">Alternative splicing</keyword>
<keyword id="KW-0130">Cell adhesion</keyword>
<keyword id="KW-0965">Cell junction</keyword>
<keyword id="KW-0966">Cell projection</keyword>
<keyword id="KW-0963">Cytoplasm</keyword>
<keyword id="KW-0903">Direct protein sequencing</keyword>
<keyword id="KW-0597">Phosphoprotein</keyword>
<keyword id="KW-1185">Reference proteome</keyword>
<keyword id="KW-0728">SH3 domain</keyword>
<keyword id="KW-0729">SH3-binding</keyword>
<name>BCAR1_RAT</name>
<proteinExistence type="evidence at protein level"/>
<sequence>MKYLVSVGAGPARRAGGLEDVSWGPRVSRRPQSYRAARHVNESLPRSAFRVPAAHGASVTPSAALGSGLPETQPEAVCRGTEKPRFAEGCKPAASRDKNVLAKALYDNVAESPDELSFRKGDIMTVLERDTQGLDGWWLCSLHGRQGIVPGNRLKILVGMYDKKPAAPGPGPPATPPQPQPSLPQGVHTPVPPASQYSPMLPTAYQPQPDNVYLVPTPSKTQQGLYQAPGPNPQFQSPPAKQTSTFSKQTPHHSFPSPATDLYQVPPGPGSPAQDIYQVPPSAGTGHDIYQVPPSLDTRSWEGTKPPAKVVVPTRVGQGYVYEASQAEQDEYDTPRHLLAPGSQDIYDVPPVRGLLPNQYGQEVYDTPPMAVKGPNGRDPLLDVYDVPPSVEKGLPPSNHHSVYDVPPSVSKDVPDGPLLREETYDVPPAFAKPKPFDPTRHPLILAAPPPDSPPAEDVYDVPPPAPDLYDVPPGLRRPGPGTLYDVPRERVLPPEVADGSVIDDGVYAVPPPAEREAPTDGKRLSASSTGSTRSSQSASSLEVVVPGREPLELEVAVETLARLQQGVSTTVAHLLDLVGSASGPGGWRSTSEPQEPPVQDLKAAVAAVHGAVHELLEFARSAVSSATHTSDRTLHAKLSRQLQKMEDVYQTLVVHGQVLDSGRGGPGFTLDDLDRLVACSRAVPEDAKQLASFLHGNASLLFRRTKAPGPGPEGSSSLHLNPTDKASSIQSRPLPSPPKFTSQDSPDGQYENSEGGWMEDYDYVHLQGKEEFEKTQKELLEKGNIVRQGKGQLELQQLKQFERLEQEVSRPIDHDLANWTPAQPLVPGRTGGLGPSDRQLLLFYLEQCEANLTTLTDAVDAFFTAVATNQPPKIFVAHSKFVILSAHKLVFIGDTLSRQAKAADVRSKVTHYSNLLCDLLRGIVATTKAAALQYPSPSAAQDMVDRVKELGHSTQQFRRVLGQLAAA</sequence>
<evidence type="ECO:0000250" key="1"/>
<evidence type="ECO:0000250" key="2">
    <source>
        <dbReference type="UniProtKB" id="P56945"/>
    </source>
</evidence>
<evidence type="ECO:0000250" key="3">
    <source>
        <dbReference type="UniProtKB" id="Q61140"/>
    </source>
</evidence>
<evidence type="ECO:0000255" key="4"/>
<evidence type="ECO:0000255" key="5">
    <source>
        <dbReference type="PROSITE-ProRule" id="PRU00192"/>
    </source>
</evidence>
<evidence type="ECO:0000256" key="6">
    <source>
        <dbReference type="SAM" id="MobiDB-lite"/>
    </source>
</evidence>
<evidence type="ECO:0000269" key="7">
    <source>
    </source>
</evidence>
<evidence type="ECO:0000269" key="8">
    <source>
    </source>
</evidence>
<evidence type="ECO:0000305" key="9"/>
<evidence type="ECO:0007744" key="10">
    <source>
    </source>
</evidence>
<evidence type="ECO:0007829" key="11">
    <source>
        <dbReference type="PDB" id="1Z23"/>
    </source>
</evidence>
<accession>Q63767</accession>
<accession>Q63766</accession>
<organism>
    <name type="scientific">Rattus norvegicus</name>
    <name type="common">Rat</name>
    <dbReference type="NCBI Taxonomy" id="10116"/>
    <lineage>
        <taxon>Eukaryota</taxon>
        <taxon>Metazoa</taxon>
        <taxon>Chordata</taxon>
        <taxon>Craniata</taxon>
        <taxon>Vertebrata</taxon>
        <taxon>Euteleostomi</taxon>
        <taxon>Mammalia</taxon>
        <taxon>Eutheria</taxon>
        <taxon>Euarchontoglires</taxon>
        <taxon>Glires</taxon>
        <taxon>Rodentia</taxon>
        <taxon>Myomorpha</taxon>
        <taxon>Muroidea</taxon>
        <taxon>Muridae</taxon>
        <taxon>Murinae</taxon>
        <taxon>Rattus</taxon>
    </lineage>
</organism>
<feature type="chain" id="PRO_0000064856" description="Breast cancer anti-estrogen resistance protein 1">
    <location>
        <begin position="1"/>
        <end position="968"/>
    </location>
</feature>
<feature type="domain" description="SH3" evidence="5">
    <location>
        <begin position="97"/>
        <end position="159"/>
    </location>
</feature>
<feature type="region of interest" description="Disordered" evidence="6">
    <location>
        <begin position="164"/>
        <end position="277"/>
    </location>
</feature>
<feature type="region of interest" description="Substrate for kinases">
    <location>
        <begin position="213"/>
        <end position="514"/>
    </location>
</feature>
<feature type="region of interest" description="Disordered" evidence="6">
    <location>
        <begin position="393"/>
        <end position="416"/>
    </location>
</feature>
<feature type="region of interest" description="Disordered" evidence="6">
    <location>
        <begin position="503"/>
        <end position="544"/>
    </location>
</feature>
<feature type="region of interest" description="Disordered" evidence="6">
    <location>
        <begin position="705"/>
        <end position="756"/>
    </location>
</feature>
<feature type="region of interest" description="Divergent helix-loop-helix motif">
    <location>
        <begin position="844"/>
        <end position="894"/>
    </location>
</feature>
<feature type="short sequence motif" description="SH3-binding" evidence="4">
    <location>
        <begin position="733"/>
        <end position="741"/>
    </location>
</feature>
<feature type="compositionally biased region" description="Pro residues" evidence="6">
    <location>
        <begin position="167"/>
        <end position="182"/>
    </location>
</feature>
<feature type="compositionally biased region" description="Polar residues" evidence="6">
    <location>
        <begin position="233"/>
        <end position="249"/>
    </location>
</feature>
<feature type="compositionally biased region" description="Basic and acidic residues" evidence="6">
    <location>
        <begin position="514"/>
        <end position="524"/>
    </location>
</feature>
<feature type="compositionally biased region" description="Low complexity" evidence="6">
    <location>
        <begin position="525"/>
        <end position="542"/>
    </location>
</feature>
<feature type="compositionally biased region" description="Polar residues" evidence="6">
    <location>
        <begin position="715"/>
        <end position="753"/>
    </location>
</feature>
<feature type="modified residue" description="N-acetylmethionine" evidence="2">
    <location>
        <position position="1"/>
    </location>
</feature>
<feature type="modified residue" description="Phosphotyrosine; by SRC" evidence="2">
    <location>
        <position position="226"/>
    </location>
</feature>
<feature type="modified residue" description="Phosphoserine" evidence="2">
    <location>
        <position position="237"/>
    </location>
</feature>
<feature type="modified residue" description="Phosphotyrosine" evidence="3">
    <location>
        <position position="332"/>
    </location>
</feature>
<feature type="modified residue" description="Phosphotyrosine; by ABL1" evidence="7">
    <location>
        <position position="347"/>
    </location>
</feature>
<feature type="modified residue" description="Phosphothreonine" evidence="2">
    <location>
        <position position="367"/>
    </location>
</feature>
<feature type="modified residue" description="Phosphoserine" evidence="2">
    <location>
        <position position="390"/>
    </location>
</feature>
<feature type="modified residue" description="Phosphotyrosine" evidence="3">
    <location>
        <position position="460"/>
    </location>
</feature>
<feature type="modified residue" description="Phosphotyrosine" evidence="3">
    <location>
        <position position="470"/>
    </location>
</feature>
<feature type="modified residue" description="Phosphotyrosine" evidence="3">
    <location>
        <position position="508"/>
    </location>
</feature>
<feature type="modified residue" description="Phosphoserine" evidence="2">
    <location>
        <position position="526"/>
    </location>
</feature>
<feature type="modified residue" description="Phosphoserine" evidence="2">
    <location>
        <position position="535"/>
    </location>
</feature>
<feature type="modified residue" description="Phosphoserine" evidence="10">
    <location>
        <position position="737"/>
    </location>
</feature>
<feature type="splice variant" id="VSP_004135" description="In isoform Short." evidence="9">
    <location>
        <begin position="5"/>
        <end position="98"/>
    </location>
</feature>
<feature type="helix" evidence="11">
    <location>
        <begin position="554"/>
        <end position="581"/>
    </location>
</feature>
<feature type="strand" evidence="11">
    <location>
        <begin position="591"/>
        <end position="594"/>
    </location>
</feature>
<feature type="helix" evidence="11">
    <location>
        <begin position="599"/>
        <end position="624"/>
    </location>
</feature>
<feature type="helix" evidence="11">
    <location>
        <begin position="634"/>
        <end position="661"/>
    </location>
</feature>
<feature type="strand" evidence="11">
    <location>
        <begin position="664"/>
        <end position="666"/>
    </location>
</feature>
<feature type="helix" evidence="11">
    <location>
        <begin position="671"/>
        <end position="702"/>
    </location>
</feature>